<proteinExistence type="predicted"/>
<gene>
    <name type="ordered locus">BpOF4_00895</name>
</gene>
<evidence type="ECO:0000305" key="1"/>
<feature type="chain" id="PRO_0000066183" description="Uncharacterized protein BpOF4_00895">
    <location>
        <begin position="1"/>
        <end position="185"/>
    </location>
</feature>
<feature type="sequence conflict" description="In Ref. 1; AAA22368." evidence="1" ref="1">
    <original>Y</original>
    <variation>H</variation>
    <location>
        <position position="113"/>
    </location>
</feature>
<name>Y179_ALKPO</name>
<keyword id="KW-1185">Reference proteome</keyword>
<dbReference type="EMBL" id="M94110">
    <property type="protein sequence ID" value="AAA22368.1"/>
    <property type="molecule type" value="Genomic_DNA"/>
</dbReference>
<dbReference type="EMBL" id="CP001878">
    <property type="protein sequence ID" value="ADC48248.1"/>
    <property type="molecule type" value="Genomic_DNA"/>
</dbReference>
<dbReference type="RefSeq" id="WP_012959530.1">
    <property type="nucleotide sequence ID" value="NC_013791.2"/>
</dbReference>
<dbReference type="SMR" id="Q04453"/>
<dbReference type="STRING" id="398511.BpOF4_00895"/>
<dbReference type="KEGG" id="bpf:BpOF4_00895"/>
<dbReference type="eggNOG" id="COG2322">
    <property type="taxonomic scope" value="Bacteria"/>
</dbReference>
<dbReference type="HOGENOM" id="CLU_104065_0_0_9"/>
<dbReference type="Proteomes" id="UP000001544">
    <property type="component" value="Chromosome"/>
</dbReference>
<dbReference type="InterPro" id="IPR007352">
    <property type="entry name" value="DUF420"/>
</dbReference>
<dbReference type="PANTHER" id="PTHR37692:SF1">
    <property type="entry name" value="DUF420 DOMAIN-CONTAINING PROTEIN"/>
    <property type="match status" value="1"/>
</dbReference>
<dbReference type="PANTHER" id="PTHR37692">
    <property type="entry name" value="HYPOTHETICAL MEMBRANE SPANNING PROTEIN"/>
    <property type="match status" value="1"/>
</dbReference>
<dbReference type="Pfam" id="PF04238">
    <property type="entry name" value="DUF420"/>
    <property type="match status" value="1"/>
</dbReference>
<protein>
    <recommendedName>
        <fullName>Uncharacterized protein BpOF4_00895</fullName>
    </recommendedName>
    <alternativeName>
        <fullName>ORF1</fullName>
    </alternativeName>
</protein>
<organism>
    <name type="scientific">Alkalihalophilus pseudofirmus (strain ATCC BAA-2126 / JCM 17055 / OF4)</name>
    <name type="common">Bacillus pseudofirmus</name>
    <dbReference type="NCBI Taxonomy" id="398511"/>
    <lineage>
        <taxon>Bacteria</taxon>
        <taxon>Bacillati</taxon>
        <taxon>Bacillota</taxon>
        <taxon>Bacilli</taxon>
        <taxon>Bacillales</taxon>
        <taxon>Bacillaceae</taxon>
        <taxon>Alkalihalophilus</taxon>
    </lineage>
</organism>
<accession>Q04453</accession>
<accession>D3FU46</accession>
<reference key="1">
    <citation type="journal article" date="1993" name="J. Biol. Chem.">
        <title>Cloning of the cta operon from alkaliphilic Bacillus firmus OF4 and characterization of the pH-regulated cytochrome caa3 oxidase it encodes.</title>
        <authorList>
            <person name="Quirk P.G."/>
            <person name="Hicks D.B."/>
            <person name="Krulwich T.A."/>
        </authorList>
    </citation>
    <scope>NUCLEOTIDE SEQUENCE [GENOMIC DNA]</scope>
</reference>
<reference key="2">
    <citation type="journal article" date="2011" name="Environ. Microbiol.">
        <title>Genome of alkaliphilic Bacillus pseudofirmus OF4 reveals adaptations that support the ability to grow in an external pH range from 7.5 to 11.4.</title>
        <authorList>
            <person name="Janto B."/>
            <person name="Ahmed A."/>
            <person name="Ito M."/>
            <person name="Liu J."/>
            <person name="Hicks D.B."/>
            <person name="Pagni S."/>
            <person name="Fackelmayer O.J."/>
            <person name="Smith T.A."/>
            <person name="Earl J."/>
            <person name="Elbourne L.D."/>
            <person name="Hassan K."/>
            <person name="Paulsen I.T."/>
            <person name="Kolsto A.B."/>
            <person name="Tourasse N.J."/>
            <person name="Ehrlich G.D."/>
            <person name="Boissy R."/>
            <person name="Ivey D.M."/>
            <person name="Li G."/>
            <person name="Xue Y."/>
            <person name="Ma Y."/>
            <person name="Hu F.Z."/>
            <person name="Krulwich T.A."/>
        </authorList>
    </citation>
    <scope>NUCLEOTIDE SEQUENCE [LARGE SCALE GENOMIC DNA]</scope>
    <source>
        <strain>ATCC BAA-2126 / JCM 17055 / OF4</strain>
    </source>
</reference>
<sequence length="185" mass="20987">MSNHQYAADNPSFKKRNYKPFIIIVTIVINGLVVLLSGMPGYENFNAFDVKVLPLMNAIFNSFTFLFLLAALIAILKKNVVVHRRFIYAAFITTTLFLVTYVAHHFLSASTPYGGSGIMAGIYYFILITHIVLAAIIVPLALTSVARAWNMENERHRKIARWTMPIWLYVSLTGVLVYVMISPYY</sequence>